<sequence length="798" mass="89229">MEEPTTSELKLSDNVMNEISDMCITEYCKPNMSLMAQINELFPTEQSLTQLDSIIASVEGEIGELDNELAYLVETNANVSERGEEALKHAQDAMIELEKSIGSIRERTKSSDEIVREMTRDIKQLDIAKRNLTASITTLHHLHILLTGVESLGAWVDKKDYSSIARQLPAILNVLQLFDAYKESDQIANLSGQLDKLKASLTIQLAKDLKNAFQTGQLSDRITDMCRVAAALEGNVKENFVKWFIEQQLSEYVIIYADNEEGAWLDKVDDRYKWFVRKLTDFERAGLSNIFPADWHMGRRLTSEFCTVTRDILYRIMTRRRQDLDWKLLGHAIQHTKMFEALLTKRFPEKDGISFEKAIWSVFDTFLDVFINAQEKTLNEFLDTCASKIRSGEEKPSRESSTHAVPFPSSADMFLLLKKVITESSKLSSEPDALIRDVIGVVRVCLRGYATSCLVAFLPSLGSQQSGAANLFSLIREEIAYPRLTPDQQFLVCCILATADWCAETSIQLQEKLSQRIPGVDISQETEAFYSITNQSLQVLVQDVESTCDAALQSISKVNWTAVDCVGDESPFIGSMRAHLRQAVPLIRDMLSDRRKYFAHFCLKLATQLAHKFVGSLFRCRTISTHGAEQLLLDTHSLKTFLLSVPSIDSIINSKPPTAYVTSVNAALTKAEMILKVVMCSLETVDEFVEQYIKLLPASDAAEMQKVLEMKGVKRQEHSAVLNAYRLKIGASGSDPIQQSNSLTSRIGGALPTVGSAASVSEAFNAVVSMAADGLSDQAVTSSIDKLKRFERLVKRQL</sequence>
<comment type="function">
    <text evidence="2 3">Acts as a component of the GARP complex that is involved in retrograde transport from early and late endosomes to the trans-Golgi network (TGN) (PubMed:21613545). The GARP complex facilitates tethering as well as SNARE complex assembly at the Golgi (PubMed:21613545). Plays a role in the trafficking of cargo to dense-core vesicles, probably through association with the EARP-interacting protein eipr-1 (PubMed:27191843). Important for neuronal function (PubMed:27191843).</text>
</comment>
<comment type="subunit">
    <text evidence="2">Component of the Golgi-associated retrograde protein (GARP) complex, also called VFT (VPS fifty-three) complex, composed of vps-51, vps-52, vps-53 and vps-54. Within the complex interacts with vps-51, vps-52 and vps-54 (PubMed:21613545).</text>
</comment>
<comment type="interaction">
    <interactant intactId="EBI-6394890">
        <id>P34561</id>
    </interactant>
    <interactant intactId="EBI-313277">
        <id>O01839</id>
        <label>vps-51</label>
    </interactant>
    <organismsDiffer>false</organismsDiffer>
    <experiments>2</experiments>
</comment>
<comment type="interaction">
    <interactant intactId="EBI-6394890">
        <id>P34561</id>
    </interactant>
    <interactant intactId="EBI-318981">
        <id>G5EFV8</id>
        <label>vps-52</label>
    </interactant>
    <organismsDiffer>false</organismsDiffer>
    <experiments>3</experiments>
</comment>
<comment type="interaction">
    <interactant intactId="EBI-6394890">
        <id>P34561</id>
    </interactant>
    <interactant intactId="EBI-6395200">
        <id>Q22639</id>
        <label>vps-54</label>
    </interactant>
    <organismsDiffer>false</organismsDiffer>
    <experiments>5</experiments>
</comment>
<comment type="subcellular location">
    <subcellularLocation>
        <location evidence="1">Golgi apparatus</location>
        <location evidence="1">trans-Golgi network membrane</location>
        <topology evidence="1">Peripheral membrane protein</topology>
    </subcellularLocation>
    <subcellularLocation>
        <location evidence="1">Endosome membrane</location>
        <topology evidence="1">Peripheral membrane protein</topology>
    </subcellularLocation>
    <subcellularLocation>
        <location evidence="3">Perikaryon</location>
    </subcellularLocation>
    <subcellularLocation>
        <location evidence="3">Cytoplasm</location>
        <location evidence="3">Perinuclear region</location>
    </subcellularLocation>
    <text evidence="3">Co-localizes with rab-2 to perinuclear puncta in the perikaryon.</text>
</comment>
<comment type="alternative products">
    <event type="alternative splicing"/>
    <isoform>
        <id>P34561-1</id>
        <name evidence="5">a</name>
        <sequence type="displayed"/>
    </isoform>
    <isoform>
        <id>P34561-2</id>
        <name evidence="6">b</name>
        <sequence type="described" ref="VSP_043942"/>
    </isoform>
</comment>
<comment type="tissue specificity">
    <text evidence="2 3">Ubiquitously expressed, with particularly strong expression in neuronal cells (PubMed:21613545). Specifically expressed in head and tail neurons and in the pharynx and ventral cord motor neurons (PubMed:27191843).</text>
</comment>
<comment type="disruption phenotype">
    <text evidence="2 3">Mutants are viable but display reduced brood size and enlarged lysosomes (PubMed:21613545). Egg-laying defect, slow, but coordinated locomotion, and reduced levels of unprocessed and processed cargo in the motor neuron axon of the dorsal nerve cord (PubMed:27191843).</text>
</comment>
<comment type="similarity">
    <text evidence="4">Belongs to the VPS53 family.</text>
</comment>
<evidence type="ECO:0000250" key="1"/>
<evidence type="ECO:0000269" key="2">
    <source>
    </source>
</evidence>
<evidence type="ECO:0000269" key="3">
    <source>
    </source>
</evidence>
<evidence type="ECO:0000305" key="4"/>
<evidence type="ECO:0000312" key="5">
    <source>
        <dbReference type="WormBase" id="T05G5.8a"/>
    </source>
</evidence>
<evidence type="ECO:0000312" key="6">
    <source>
        <dbReference type="WormBase" id="T05G5.8b"/>
    </source>
</evidence>
<dbReference type="EMBL" id="BX284603">
    <property type="protein sequence ID" value="CAA81595.3"/>
    <property type="molecule type" value="Genomic_DNA"/>
</dbReference>
<dbReference type="EMBL" id="BX284603">
    <property type="protein sequence ID" value="CBY25199.2"/>
    <property type="molecule type" value="Genomic_DNA"/>
</dbReference>
<dbReference type="PIR" id="D88564">
    <property type="entry name" value="D88564"/>
</dbReference>
<dbReference type="PIR" id="S41008">
    <property type="entry name" value="S41008"/>
</dbReference>
<dbReference type="RefSeq" id="NP_001255027.2">
    <molecule id="P34561-1"/>
    <property type="nucleotide sequence ID" value="NM_001268098.3"/>
</dbReference>
<dbReference type="RefSeq" id="NP_001255028.2">
    <molecule id="P34561-2"/>
    <property type="nucleotide sequence ID" value="NM_001268099.4"/>
</dbReference>
<dbReference type="SMR" id="P34561"/>
<dbReference type="BioGRID" id="41572">
    <property type="interactions" value="4"/>
</dbReference>
<dbReference type="ComplexPortal" id="CPX-365">
    <property type="entry name" value="GARP tethering complex"/>
</dbReference>
<dbReference type="FunCoup" id="P34561">
    <property type="interactions" value="2814"/>
</dbReference>
<dbReference type="IntAct" id="P34561">
    <property type="interactions" value="7"/>
</dbReference>
<dbReference type="STRING" id="6239.T05G5.8a.1"/>
<dbReference type="PaxDb" id="6239-T05G5.8a.2"/>
<dbReference type="PeptideAtlas" id="P34561"/>
<dbReference type="EnsemblMetazoa" id="T05G5.8a.1">
    <molecule id="P34561-1"/>
    <property type="protein sequence ID" value="T05G5.8a.1"/>
    <property type="gene ID" value="WBGene00011502"/>
</dbReference>
<dbReference type="EnsemblMetazoa" id="T05G5.8b.1">
    <molecule id="P34561-2"/>
    <property type="protein sequence ID" value="T05G5.8b.1"/>
    <property type="gene ID" value="WBGene00011502"/>
</dbReference>
<dbReference type="GeneID" id="176377"/>
<dbReference type="KEGG" id="cel:CELE_T05G5.8"/>
<dbReference type="UCSC" id="T05G5.8.2">
    <molecule id="P34561-1"/>
    <property type="organism name" value="c. elegans"/>
</dbReference>
<dbReference type="AGR" id="WB:WBGene00011502"/>
<dbReference type="CTD" id="176377"/>
<dbReference type="WormBase" id="T05G5.8a">
    <molecule id="P34561-1"/>
    <property type="protein sequence ID" value="CE47826"/>
    <property type="gene ID" value="WBGene00011502"/>
    <property type="gene designation" value="vps-53"/>
</dbReference>
<dbReference type="WormBase" id="T05G5.8b">
    <molecule id="P34561-2"/>
    <property type="protein sequence ID" value="CE47898"/>
    <property type="gene ID" value="WBGene00011502"/>
    <property type="gene designation" value="vps-53"/>
</dbReference>
<dbReference type="eggNOG" id="KOG2180">
    <property type="taxonomic scope" value="Eukaryota"/>
</dbReference>
<dbReference type="GeneTree" id="ENSGT00390000015165"/>
<dbReference type="HOGENOM" id="CLU_007339_1_0_1"/>
<dbReference type="InParanoid" id="P34561"/>
<dbReference type="OMA" id="YKFAEAK"/>
<dbReference type="OrthoDB" id="10261632at2759"/>
<dbReference type="PhylomeDB" id="P34561"/>
<dbReference type="PRO" id="PR:P34561"/>
<dbReference type="Proteomes" id="UP000001940">
    <property type="component" value="Chromosome III"/>
</dbReference>
<dbReference type="Bgee" id="WBGene00011502">
    <property type="expression patterns" value="Expressed in germ line (C elegans) and 4 other cell types or tissues"/>
</dbReference>
<dbReference type="GO" id="GO:0005829">
    <property type="term" value="C:cytosol"/>
    <property type="evidence" value="ECO:0007669"/>
    <property type="project" value="GOC"/>
</dbReference>
<dbReference type="GO" id="GO:0010008">
    <property type="term" value="C:endosome membrane"/>
    <property type="evidence" value="ECO:0007669"/>
    <property type="project" value="UniProtKB-SubCell"/>
</dbReference>
<dbReference type="GO" id="GO:0000938">
    <property type="term" value="C:GARP complex"/>
    <property type="evidence" value="ECO:0000314"/>
    <property type="project" value="UniProtKB"/>
</dbReference>
<dbReference type="GO" id="GO:0043204">
    <property type="term" value="C:perikaryon"/>
    <property type="evidence" value="ECO:0000314"/>
    <property type="project" value="UniProtKB"/>
</dbReference>
<dbReference type="GO" id="GO:0048471">
    <property type="term" value="C:perinuclear region of cytoplasm"/>
    <property type="evidence" value="ECO:0000314"/>
    <property type="project" value="UniProtKB"/>
</dbReference>
<dbReference type="GO" id="GO:1904810">
    <property type="term" value="P:negative regulation of dense core granule transport"/>
    <property type="evidence" value="ECO:0000315"/>
    <property type="project" value="UniProtKB"/>
</dbReference>
<dbReference type="GO" id="GO:1904811">
    <property type="term" value="P:positive regulation of dense core granule transport"/>
    <property type="evidence" value="ECO:0000315"/>
    <property type="project" value="UniProtKB"/>
</dbReference>
<dbReference type="GO" id="GO:0090326">
    <property type="term" value="P:positive regulation of locomotion involved in locomotory behavior"/>
    <property type="evidence" value="ECO:0000315"/>
    <property type="project" value="UniProtKB"/>
</dbReference>
<dbReference type="GO" id="GO:0060378">
    <property type="term" value="P:regulation of brood size"/>
    <property type="evidence" value="ECO:0000315"/>
    <property type="project" value="UniProtKB"/>
</dbReference>
<dbReference type="GO" id="GO:0042147">
    <property type="term" value="P:retrograde transport, endosome to Golgi"/>
    <property type="evidence" value="ECO:0000318"/>
    <property type="project" value="GO_Central"/>
</dbReference>
<dbReference type="FunFam" id="1.10.357.110:FF:000005">
    <property type="entry name" value="CRE-VPS-53 protein"/>
    <property type="match status" value="1"/>
</dbReference>
<dbReference type="Gene3D" id="1.10.357.110">
    <property type="entry name" value="Vacuolar protein sorting-associated protein 53, C-terminus"/>
    <property type="match status" value="1"/>
</dbReference>
<dbReference type="InterPro" id="IPR039766">
    <property type="entry name" value="Vps53"/>
</dbReference>
<dbReference type="InterPro" id="IPR031745">
    <property type="entry name" value="Vps53_C"/>
</dbReference>
<dbReference type="InterPro" id="IPR038260">
    <property type="entry name" value="Vps53_C_sf"/>
</dbReference>
<dbReference type="InterPro" id="IPR007234">
    <property type="entry name" value="Vps53_N"/>
</dbReference>
<dbReference type="PANTHER" id="PTHR12820:SF0">
    <property type="entry name" value="VACUOLAR PROTEIN SORTING-ASSOCIATED PROTEIN 53 HOMOLOG"/>
    <property type="match status" value="1"/>
</dbReference>
<dbReference type="PANTHER" id="PTHR12820">
    <property type="entry name" value="VACUOLAR SORTING PROTEIN 53"/>
    <property type="match status" value="1"/>
</dbReference>
<dbReference type="Pfam" id="PF16854">
    <property type="entry name" value="VPS53_C"/>
    <property type="match status" value="1"/>
</dbReference>
<dbReference type="Pfam" id="PF04100">
    <property type="entry name" value="Vps53_N"/>
    <property type="match status" value="1"/>
</dbReference>
<proteinExistence type="evidence at protein level"/>
<organism>
    <name type="scientific">Caenorhabditis elegans</name>
    <dbReference type="NCBI Taxonomy" id="6239"/>
    <lineage>
        <taxon>Eukaryota</taxon>
        <taxon>Metazoa</taxon>
        <taxon>Ecdysozoa</taxon>
        <taxon>Nematoda</taxon>
        <taxon>Chromadorea</taxon>
        <taxon>Rhabditida</taxon>
        <taxon>Rhabditina</taxon>
        <taxon>Rhabditomorpha</taxon>
        <taxon>Rhabditoidea</taxon>
        <taxon>Rhabditidae</taxon>
        <taxon>Peloderinae</taxon>
        <taxon>Caenorhabditis</taxon>
    </lineage>
</organism>
<keyword id="KW-0025">Alternative splicing</keyword>
<keyword id="KW-0963">Cytoplasm</keyword>
<keyword id="KW-0967">Endosome</keyword>
<keyword id="KW-0333">Golgi apparatus</keyword>
<keyword id="KW-0472">Membrane</keyword>
<keyword id="KW-1185">Reference proteome</keyword>
<accession>P34561</accession>
<accession>E5QCF9</accession>
<feature type="chain" id="PRO_0000065447" description="Vacuolar protein sorting-associated protein 53 homolog">
    <location>
        <begin position="1"/>
        <end position="798"/>
    </location>
</feature>
<feature type="splice variant" id="VSP_043942" description="In isoform b." evidence="4">
    <location>
        <begin position="1"/>
        <end position="224"/>
    </location>
</feature>
<reference key="1">
    <citation type="journal article" date="1994" name="Nature">
        <title>2.2 Mb of contiguous nucleotide sequence from chromosome III of C. elegans.</title>
        <authorList>
            <person name="Wilson R."/>
            <person name="Ainscough R."/>
            <person name="Anderson K."/>
            <person name="Baynes C."/>
            <person name="Berks M."/>
            <person name="Bonfield J."/>
            <person name="Burton J."/>
            <person name="Connell M."/>
            <person name="Copsey T."/>
            <person name="Cooper J."/>
            <person name="Coulson A."/>
            <person name="Craxton M."/>
            <person name="Dear S."/>
            <person name="Du Z."/>
            <person name="Durbin R."/>
            <person name="Favello A."/>
            <person name="Fraser A."/>
            <person name="Fulton L."/>
            <person name="Gardner A."/>
            <person name="Green P."/>
            <person name="Hawkins T."/>
            <person name="Hillier L."/>
            <person name="Jier M."/>
            <person name="Johnston L."/>
            <person name="Jones M."/>
            <person name="Kershaw J."/>
            <person name="Kirsten J."/>
            <person name="Laisster N."/>
            <person name="Latreille P."/>
            <person name="Lightning J."/>
            <person name="Lloyd C."/>
            <person name="Mortimore B."/>
            <person name="O'Callaghan M."/>
            <person name="Parsons J."/>
            <person name="Percy C."/>
            <person name="Rifken L."/>
            <person name="Roopra A."/>
            <person name="Saunders D."/>
            <person name="Shownkeen R."/>
            <person name="Sims M."/>
            <person name="Smaldon N."/>
            <person name="Smith A."/>
            <person name="Smith M."/>
            <person name="Sonnhammer E."/>
            <person name="Staden R."/>
            <person name="Sulston J."/>
            <person name="Thierry-Mieg J."/>
            <person name="Thomas K."/>
            <person name="Vaudin M."/>
            <person name="Vaughan K."/>
            <person name="Waterston R."/>
            <person name="Watson A."/>
            <person name="Weinstock L."/>
            <person name="Wilkinson-Sproat J."/>
            <person name="Wohldman P."/>
        </authorList>
    </citation>
    <scope>NUCLEOTIDE SEQUENCE [LARGE SCALE GENOMIC DNA]</scope>
    <scope>ALTERNATIVE SPLICING</scope>
    <source>
        <strain>Bristol N2</strain>
    </source>
</reference>
<reference key="2">
    <citation type="journal article" date="1998" name="Science">
        <title>Genome sequence of the nematode C. elegans: a platform for investigating biology.</title>
        <authorList>
            <consortium name="The C. elegans sequencing consortium"/>
        </authorList>
    </citation>
    <scope>NUCLEOTIDE SEQUENCE [LARGE SCALE GENOMIC DNA]</scope>
    <source>
        <strain>Bristol N2</strain>
    </source>
</reference>
<reference key="3">
    <citation type="journal article" date="2011" name="Mol. Biol. Cell">
        <title>The Caenorhabditis elegans GARP complex contains the conserved Vps51 subunit and is required to maintain lysosomal morphology.</title>
        <authorList>
            <person name="Luo L."/>
            <person name="Hannemann M."/>
            <person name="Koenig S."/>
            <person name="Hegermann J."/>
            <person name="Ailion M."/>
            <person name="Cho M.K."/>
            <person name="Sasidharan N."/>
            <person name="Zweckstetter M."/>
            <person name="Rensing S.A."/>
            <person name="Eimer S."/>
        </authorList>
    </citation>
    <scope>FUNCTION</scope>
    <scope>IDENTIFICATION IN THE GARP COMPLEX</scope>
    <scope>INTERACTION WITH VPS-51; VPS-52 AND VPS-54</scope>
    <scope>TISSUE SPECIFICITY</scope>
    <scope>DISRUPTION PHENOTYPE</scope>
</reference>
<reference key="4">
    <citation type="journal article" date="2016" name="PLoS Genet.">
        <title>The EARP complex and its interactor eipr-1 are required for cargo sorting to dense-core vesicles.</title>
        <authorList>
            <person name="Topalidou I."/>
            <person name="Cattin-Ortola J."/>
            <person name="Pappas A.L."/>
            <person name="Cooper K."/>
            <person name="Merrihew G.E."/>
            <person name="MacCoss M.J."/>
            <person name="Ailion M."/>
        </authorList>
    </citation>
    <scope>FUNCTION</scope>
    <scope>SUBCELLULAR LOCATION</scope>
    <scope>TISSUE SPECIFICITY</scope>
    <scope>DISRUPTION PHENOTYPE</scope>
</reference>
<name>VPS53_CAEEL</name>
<gene>
    <name evidence="5" type="primary">vps-53</name>
    <name evidence="5" type="ORF">T05G5.8</name>
</gene>
<protein>
    <recommendedName>
        <fullName>Vacuolar protein sorting-associated protein 53 homolog</fullName>
    </recommendedName>
</protein>